<keyword id="KW-1185">Reference proteome</keyword>
<protein>
    <recommendedName>
        <fullName>Protein crossbronx-like</fullName>
    </recommendedName>
</protein>
<accession>Q28YD9</accession>
<organism>
    <name type="scientific">Drosophila pseudoobscura pseudoobscura</name>
    <name type="common">Fruit fly</name>
    <dbReference type="NCBI Taxonomy" id="46245"/>
    <lineage>
        <taxon>Eukaryota</taxon>
        <taxon>Metazoa</taxon>
        <taxon>Ecdysozoa</taxon>
        <taxon>Arthropoda</taxon>
        <taxon>Hexapoda</taxon>
        <taxon>Insecta</taxon>
        <taxon>Pterygota</taxon>
        <taxon>Neoptera</taxon>
        <taxon>Endopterygota</taxon>
        <taxon>Diptera</taxon>
        <taxon>Brachycera</taxon>
        <taxon>Muscomorpha</taxon>
        <taxon>Ephydroidea</taxon>
        <taxon>Drosophilidae</taxon>
        <taxon>Drosophila</taxon>
        <taxon>Sophophora</taxon>
    </lineage>
</organism>
<evidence type="ECO:0000255" key="1">
    <source>
        <dbReference type="PROSITE-ProRule" id="PRU00388"/>
    </source>
</evidence>
<evidence type="ECO:0000305" key="2"/>
<name>AKTP2_DROPS</name>
<comment type="similarity">
    <text evidence="1">Belongs to the ubiquitin-conjugating enzyme family. FTS subfamily.</text>
</comment>
<comment type="caution">
    <text evidence="2">Lacks the conserved Cys residue necessary for ubiquitin-conjugating enzyme E2 activity.</text>
</comment>
<proteinExistence type="inferred from homology"/>
<feature type="chain" id="PRO_0000379047" description="Protein crossbronx-like">
    <location>
        <begin position="1"/>
        <end position="262"/>
    </location>
</feature>
<feature type="domain" description="UBC core" evidence="1">
    <location>
        <begin position="15"/>
        <end position="179"/>
    </location>
</feature>
<dbReference type="EMBL" id="CM000071">
    <property type="protein sequence ID" value="EAL26026.2"/>
    <property type="molecule type" value="Genomic_DNA"/>
</dbReference>
<dbReference type="RefSeq" id="XP_001361448.2">
    <property type="nucleotide sequence ID" value="XM_001361411.3"/>
</dbReference>
<dbReference type="SMR" id="Q28YD9"/>
<dbReference type="FunCoup" id="Q28YD9">
    <property type="interactions" value="62"/>
</dbReference>
<dbReference type="STRING" id="46245.Q28YD9"/>
<dbReference type="EnsemblMetazoa" id="FBtr0277762">
    <property type="protein sequence ID" value="FBpp0276200"/>
    <property type="gene ID" value="FBgn0074231"/>
</dbReference>
<dbReference type="KEGG" id="dpo:4804973"/>
<dbReference type="eggNOG" id="KOG0429">
    <property type="taxonomic scope" value="Eukaryota"/>
</dbReference>
<dbReference type="HOGENOM" id="CLU_083049_2_0_1"/>
<dbReference type="InParanoid" id="Q28YD9"/>
<dbReference type="OMA" id="DQHHIWH"/>
<dbReference type="Proteomes" id="UP000001819">
    <property type="component" value="Chromosome 3"/>
</dbReference>
<dbReference type="Bgee" id="FBgn0074231">
    <property type="expression patterns" value="Expressed in male reproductive system and 1 other cell type or tissue"/>
</dbReference>
<dbReference type="CDD" id="cd23814">
    <property type="entry name" value="UEV_AKTIP"/>
    <property type="match status" value="1"/>
</dbReference>
<dbReference type="Gene3D" id="3.10.110.10">
    <property type="entry name" value="Ubiquitin Conjugating Enzyme"/>
    <property type="match status" value="1"/>
</dbReference>
<dbReference type="InterPro" id="IPR000608">
    <property type="entry name" value="UBQ-conjugat_E2_core"/>
</dbReference>
<dbReference type="InterPro" id="IPR016135">
    <property type="entry name" value="UBQ-conjugating_enzyme/RWD"/>
</dbReference>
<dbReference type="Pfam" id="PF00179">
    <property type="entry name" value="UQ_con"/>
    <property type="match status" value="1"/>
</dbReference>
<dbReference type="SMART" id="SM00212">
    <property type="entry name" value="UBCc"/>
    <property type="match status" value="1"/>
</dbReference>
<dbReference type="SUPFAM" id="SSF54495">
    <property type="entry name" value="UBC-like"/>
    <property type="match status" value="1"/>
</dbReference>
<dbReference type="PROSITE" id="PS50127">
    <property type="entry name" value="UBC_2"/>
    <property type="match status" value="1"/>
</dbReference>
<sequence>MWFSWNNTEQSIAVRQGYQVLAEYQLIEQEQLKNIYAIPSYASALHWFGVIFIHSGFYAGSMFRFSIILPDNFPNGTSLPTIIFTTTCYHPHIRPQTQSLDLAPFFTGWRKDHYHVWHLLKYIQAIFADPEGSISTTVTPSGDRVCLEEAYNMDALAMLSNDRVAFIKKVQELALFTKKHMYDKPTSNDPHYIVIEPFCSERHTKIMEQLKSPSWKEATSMDTSPPAQCLARIDSSRQMDEEEAKQSAKLFAKNGKAAAALQ</sequence>
<gene>
    <name type="ORF">GA14202</name>
</gene>
<reference key="1">
    <citation type="journal article" date="2005" name="Genome Res.">
        <title>Comparative genome sequencing of Drosophila pseudoobscura: chromosomal, gene, and cis-element evolution.</title>
        <authorList>
            <person name="Richards S."/>
            <person name="Liu Y."/>
            <person name="Bettencourt B.R."/>
            <person name="Hradecky P."/>
            <person name="Letovsky S."/>
            <person name="Nielsen R."/>
            <person name="Thornton K."/>
            <person name="Hubisz M.J."/>
            <person name="Chen R."/>
            <person name="Meisel R.P."/>
            <person name="Couronne O."/>
            <person name="Hua S."/>
            <person name="Smith M.A."/>
            <person name="Zhang P."/>
            <person name="Liu J."/>
            <person name="Bussemaker H.J."/>
            <person name="van Batenburg M.F."/>
            <person name="Howells S.L."/>
            <person name="Scherer S.E."/>
            <person name="Sodergren E."/>
            <person name="Matthews B.B."/>
            <person name="Crosby M.A."/>
            <person name="Schroeder A.J."/>
            <person name="Ortiz-Barrientos D."/>
            <person name="Rives C.M."/>
            <person name="Metzker M.L."/>
            <person name="Muzny D.M."/>
            <person name="Scott G."/>
            <person name="Steffen D."/>
            <person name="Wheeler D.A."/>
            <person name="Worley K.C."/>
            <person name="Havlak P."/>
            <person name="Durbin K.J."/>
            <person name="Egan A."/>
            <person name="Gill R."/>
            <person name="Hume J."/>
            <person name="Morgan M.B."/>
            <person name="Miner G."/>
            <person name="Hamilton C."/>
            <person name="Huang Y."/>
            <person name="Waldron L."/>
            <person name="Verduzco D."/>
            <person name="Clerc-Blankenburg K.P."/>
            <person name="Dubchak I."/>
            <person name="Noor M.A.F."/>
            <person name="Anderson W."/>
            <person name="White K.P."/>
            <person name="Clark A.G."/>
            <person name="Schaeffer S.W."/>
            <person name="Gelbart W.M."/>
            <person name="Weinstock G.M."/>
            <person name="Gibbs R.A."/>
        </authorList>
    </citation>
    <scope>NUCLEOTIDE SEQUENCE [LARGE SCALE GENOMIC DNA]</scope>
    <source>
        <strain>MV2-25 / Tucson 14011-0121.94</strain>
    </source>
</reference>